<keyword id="KW-0067">ATP-binding</keyword>
<keyword id="KW-0325">Glycoprotein</keyword>
<keyword id="KW-0378">Hydrolase</keyword>
<keyword id="KW-0472">Membrane</keyword>
<keyword id="KW-0547">Nucleotide-binding</keyword>
<keyword id="KW-0645">Protease</keyword>
<keyword id="KW-1185">Reference proteome</keyword>
<keyword id="KW-0720">Serine protease</keyword>
<keyword id="KW-0732">Signal</keyword>
<keyword id="KW-0812">Transmembrane</keyword>
<keyword id="KW-1133">Transmembrane helix</keyword>
<keyword id="KW-0813">Transport</keyword>
<sequence>MKFQFSSPSKIFLFSSVILILIFIGIKFELLEDTNSNRNDKFNNIINRFINYNIDDSIYKNKQQQQQFSNKIYSNEKKILLKNKIIDTTIKPSININNNNNNNNKLNNNNNNNNNNNNNNNNNNNNNNNNNNNNYYNSIEYYSSFVSRLLKSNDDDGIYYDDYQSKYKKNHYIVQFKDRINDETREQLKEFLIGTDITILKEQPFKSHIVHYIPHDSFLVFMTKEQSVLLSSKEWISWIGEHEPSNKIHLNYHEKSIGYPVYIILSGSTNSLIQRWENTLNSILTSYNSKVKLTLINQKKLKSIVYCNDESPSSSSSSSCSLIGSEKIVYKWISEQSESNYIERSEKLQTANRLSPTVIFGTKDKLVNNDRIDIPLRGKGQILSIADTGLDGSHCFFSDSKYPIPFNQVNENHRKVVTYITYHDNEDYVNGHGTHVCGSAAGTPEDSSWAISSFSGLATDAKIAFYDLSSGSSEPTPPEDYSQMYKPLYDAGARVHGDSWGSVSLQGYYGGYSDDAGGIDAFLYEYPEFSILRAAGNNELFASLLAQATAKNAITVGAEQTAHVNYVSDALEYYDFSDNANFQRPCLFDKKYCNYTTAKCCSEVSNVKGLQLCCPASIKQNASDSFTTQPQFYNENNMGSFSSKGPTHDGRLKPDIVAPGEYITSARSNGENSTDQCGDGSLPNANGLMSISGTSMATPLATAATTILRQYLVDGYFPTGESVEENKLLPTGSLLKALMINNAQLLNGTYFWSASSTNPSNAIFEQINGANLIQGWGALRMNNWLYVKSSNPTPPSRWIGIGGLGKNQKATEWKEDSLSSGLNKSYCFTYKPSSSSSGSGGGGGTPRIVATLVWTDPPSYSGAKFNLVNNLDLLLLNSDDDSIITIGNSGGSLQPAGKVAQPDTLNNVEGIIINPTKAMNYKFTIAGTNVPIGPQKFSFVFHGENGQFDWADSCPQCVDGVQFPCLITNGIGIQSCGSDLLWTKCIVQSCNEGYNYNSLKNTCDKFLSYNYIIIIVAGGTMVLIILLLMWIKYQEYKESKRDSFRRFDDGTGIFVRPKDKDAKVTPPDLYNLVSPFIIELTIATACSLVATAASILQPFYIGNIVNNIPTTKSIGEFKSDFIIIFILAFIEFLFTNVGSWISGIVNEKMVMRLQNKVFRALIAQDMGFFQRNNSALLMNVLIVDTPMLRSALTGILLSIATGVCKLVGSLVFIFTISWKLSLAFFAAVPILGLVTQIQSQFTKRLTRQLLFHNSKASQHGTESLTNMHVVTNYCKQEKEMVKYSDQLMNVFITARKLIITNTFAGTGKWLLIESLTFVILYFSAYLVIQKQFTVGLMISFSLYIGYVVDASSSLFGVYVSYIQCLASATRVFMILRSAPRKRTTLEEEEADRLAGLSGGGGGGGDNGDDKKDKQNIENGKDVLPSNIITPIDNVENSNGKQDDPNNNNNNIGNLDYSEQLDGVSTVADSTVGLTKRELKKQKEKEQKEYFKQTGISVAETPTFLPSSYTELTECRGEIEFKNVSFRYPTRPDVQVLHNINMKFEAGKCYGLVGPSGSGKSTTLELISKFYPLHGETGGKIYMDGIDIAKIRPNNLRSFVTNVHQHPFLFDATIGENIGYAIDNPTQEDIIEAAKLAYAHEFINDLPKKYDTQIGEAGNLSGGQKKRIAVARAICAKRKIMLLDEITAELDPESEEAITQSIKVLTQGHTVVMVAHKVAAVRDCDKIFVLEKGYLVEEGTHDELMANKGKYYRMFSEDKDDTPLQNNNNNKNNNNNNNNNEPSSSSTPPNDQPTPPPQEQQEQKNDQPPPPPPQEQQEQQEQQQQQQQEQQQQQQQQQQQQQQQQQQQQQQQQQQQQQQQQQNDQPPNDYDQVPPPPPLPSESPSPPTGNNDGQPLVQMDEENDEER</sequence>
<feature type="signal peptide" evidence="1">
    <location>
        <begin position="1"/>
        <end position="31"/>
    </location>
</feature>
<feature type="chain" id="PRO_0000027191" description="Serine protease/ABC transporter B family protein tagB">
    <location>
        <begin position="32"/>
        <end position="1906"/>
    </location>
</feature>
<feature type="transmembrane region" description="Helical" evidence="3">
    <location>
        <begin position="1011"/>
        <end position="1031"/>
    </location>
</feature>
<feature type="transmembrane region" description="Helical" evidence="3">
    <location>
        <begin position="1076"/>
        <end position="1096"/>
    </location>
</feature>
<feature type="transmembrane region" description="Helical" evidence="3">
    <location>
        <begin position="1121"/>
        <end position="1141"/>
    </location>
</feature>
<feature type="transmembrane region" description="Helical" evidence="3">
    <location>
        <begin position="1210"/>
        <end position="1230"/>
    </location>
</feature>
<feature type="transmembrane region" description="Helical" evidence="3">
    <location>
        <begin position="1309"/>
        <end position="1329"/>
    </location>
</feature>
<feature type="transmembrane region" description="Helical" evidence="3">
    <location>
        <begin position="1332"/>
        <end position="1352"/>
    </location>
</feature>
<feature type="domain" description="Peptidase S8" evidence="4">
    <location>
        <begin position="356"/>
        <end position="763"/>
    </location>
</feature>
<feature type="domain" description="ABC transmembrane type-1" evidence="3">
    <location>
        <begin position="1080"/>
        <end position="1363"/>
    </location>
</feature>
<feature type="domain" description="ABC transporter" evidence="2">
    <location>
        <begin position="1518"/>
        <end position="1756"/>
    </location>
</feature>
<feature type="region of interest" description="Disordered" evidence="5">
    <location>
        <begin position="96"/>
        <end position="134"/>
    </location>
</feature>
<feature type="region of interest" description="Disordered" evidence="5">
    <location>
        <begin position="1385"/>
        <end position="1455"/>
    </location>
</feature>
<feature type="region of interest" description="Disordered" evidence="5">
    <location>
        <begin position="1757"/>
        <end position="1906"/>
    </location>
</feature>
<feature type="compositionally biased region" description="Gly residues" evidence="5">
    <location>
        <begin position="1396"/>
        <end position="1405"/>
    </location>
</feature>
<feature type="compositionally biased region" description="Basic and acidic residues" evidence="5">
    <location>
        <begin position="1407"/>
        <end position="1420"/>
    </location>
</feature>
<feature type="compositionally biased region" description="Low complexity" evidence="5">
    <location>
        <begin position="1765"/>
        <end position="1779"/>
    </location>
</feature>
<feature type="compositionally biased region" description="Low complexity" evidence="5">
    <location>
        <begin position="1814"/>
        <end position="1871"/>
    </location>
</feature>
<feature type="compositionally biased region" description="Pro residues" evidence="5">
    <location>
        <begin position="1872"/>
        <end position="1886"/>
    </location>
</feature>
<feature type="active site" description="Charge relay system" evidence="4">
    <location>
        <position position="387"/>
    </location>
</feature>
<feature type="active site" description="Charge relay system" evidence="4">
    <location>
        <position position="432"/>
    </location>
</feature>
<feature type="active site" description="Charge relay system" evidence="4">
    <location>
        <position position="695"/>
    </location>
</feature>
<feature type="binding site" evidence="2">
    <location>
        <begin position="1553"/>
        <end position="1560"/>
    </location>
    <ligand>
        <name>ATP</name>
        <dbReference type="ChEBI" id="CHEBI:30616"/>
    </ligand>
</feature>
<feature type="glycosylation site" description="N-linked (GlcNAc...) asparagine" evidence="1">
    <location>
        <position position="594"/>
    </location>
</feature>
<feature type="glycosylation site" description="N-linked (GlcNAc...) asparagine" evidence="1">
    <location>
        <position position="621"/>
    </location>
</feature>
<feature type="glycosylation site" description="N-linked (GlcNAc...) asparagine" evidence="1">
    <location>
        <position position="672"/>
    </location>
</feature>
<feature type="glycosylation site" description="N-linked (GlcNAc...) asparagine" evidence="1">
    <location>
        <position position="747"/>
    </location>
</feature>
<feature type="glycosylation site" description="N-linked (GlcNAc...) asparagine" evidence="1">
    <location>
        <position position="823"/>
    </location>
</feature>
<feature type="glycosylation site" description="N-linked (GlcNAc...) asparagine" evidence="1">
    <location>
        <position position="1172"/>
    </location>
</feature>
<feature type="glycosylation site" description="N-linked (GlcNAc...) asparagine" evidence="1">
    <location>
        <position position="1522"/>
    </location>
</feature>
<feature type="glycosylation site" description="N-linked (GlcNAc...) asparagine" evidence="1">
    <location>
        <position position="1658"/>
    </location>
</feature>
<feature type="sequence conflict" description="In Ref. 1; AAA62212." evidence="7" ref="1">
    <location>
        <position position="1829"/>
    </location>
</feature>
<comment type="function">
    <text evidence="6">Intercellular communication via tagB may mediate integration of cellular differentiation with morphogenesis.</text>
</comment>
<comment type="subcellular location">
    <subcellularLocation>
        <location evidence="3">Membrane</location>
        <topology evidence="3">Multi-pass membrane protein</topology>
    </subcellularLocation>
</comment>
<comment type="disruption phenotype">
    <text evidence="6">Null mutations in either tagB or tagC lead to a cell autonomous defect in prestalk differentiation and a 5-fold reduction in the expression of the prestalk gene ecmA. Disruption of regA in a tagB null or in a tagC null background results in higher levels of sporulation.</text>
</comment>
<comment type="similarity">
    <text evidence="7">In the C-terminal section; belongs to the ABC transporter superfamily. ABCB family. Multidrug resistance exporter (TC 3.A.1.201) subfamily.</text>
</comment>
<comment type="similarity">
    <text evidence="7">In the N-terminal section; belongs to the peptidase S8 family.</text>
</comment>
<organism>
    <name type="scientific">Dictyostelium discoideum</name>
    <name type="common">Social amoeba</name>
    <dbReference type="NCBI Taxonomy" id="44689"/>
    <lineage>
        <taxon>Eukaryota</taxon>
        <taxon>Amoebozoa</taxon>
        <taxon>Evosea</taxon>
        <taxon>Eumycetozoa</taxon>
        <taxon>Dictyostelia</taxon>
        <taxon>Dictyosteliales</taxon>
        <taxon>Dictyosteliaceae</taxon>
        <taxon>Dictyostelium</taxon>
    </lineage>
</organism>
<gene>
    <name type="primary">tagB</name>
    <name type="ORF">DDB_G0286119</name>
</gene>
<dbReference type="EC" id="3.4.21.-"/>
<dbReference type="EMBL" id="U20432">
    <property type="protein sequence ID" value="AAA62212.1"/>
    <property type="molecule type" value="Genomic_DNA"/>
</dbReference>
<dbReference type="EMBL" id="AAFI02000085">
    <property type="protein sequence ID" value="EAL64352.1"/>
    <property type="molecule type" value="Genomic_DNA"/>
</dbReference>
<dbReference type="PIR" id="T18267">
    <property type="entry name" value="T18267"/>
</dbReference>
<dbReference type="RefSeq" id="XP_637865.1">
    <property type="nucleotide sequence ID" value="XM_632773.1"/>
</dbReference>
<dbReference type="SMR" id="P54683"/>
<dbReference type="FunCoup" id="P54683">
    <property type="interactions" value="487"/>
</dbReference>
<dbReference type="STRING" id="44689.P54683"/>
<dbReference type="MEROPS" id="S08.A57"/>
<dbReference type="GlyCosmos" id="P54683">
    <property type="glycosylation" value="8 sites, No reported glycans"/>
</dbReference>
<dbReference type="GlyGen" id="P54683">
    <property type="glycosylation" value="13 sites"/>
</dbReference>
<dbReference type="PaxDb" id="44689-DDB0191217"/>
<dbReference type="EnsemblProtists" id="EAL64352">
    <property type="protein sequence ID" value="EAL64352"/>
    <property type="gene ID" value="DDB_G0286119"/>
</dbReference>
<dbReference type="GeneID" id="8625462"/>
<dbReference type="KEGG" id="ddi:DDB_G0286119"/>
<dbReference type="dictyBase" id="DDB_G0286119">
    <property type="gene designation" value="tagB"/>
</dbReference>
<dbReference type="VEuPathDB" id="AmoebaDB:DDB_G0286119"/>
<dbReference type="eggNOG" id="KOG0055">
    <property type="taxonomic scope" value="Eukaryota"/>
</dbReference>
<dbReference type="eggNOG" id="KOG0058">
    <property type="taxonomic scope" value="Eukaryota"/>
</dbReference>
<dbReference type="HOGENOM" id="CLU_235711_0_0_1"/>
<dbReference type="InParanoid" id="P54683"/>
<dbReference type="OMA" id="WISWIGE"/>
<dbReference type="PhylomeDB" id="P54683"/>
<dbReference type="Reactome" id="R-DDI-1369007">
    <property type="pathway name" value="Mitochondrial ABC transporters"/>
</dbReference>
<dbReference type="Reactome" id="R-DDI-159418">
    <property type="pathway name" value="Recycling of bile acids and salts"/>
</dbReference>
<dbReference type="Reactome" id="R-DDI-193368">
    <property type="pathway name" value="Synthesis of bile acids and bile salts via 7alpha-hydroxycholesterol"/>
</dbReference>
<dbReference type="Reactome" id="R-DDI-382556">
    <property type="pathway name" value="ABC-family proteins mediated transport"/>
</dbReference>
<dbReference type="Reactome" id="R-DDI-9754706">
    <property type="pathway name" value="Atorvastatin ADME"/>
</dbReference>
<dbReference type="Reactome" id="R-DDI-9757110">
    <property type="pathway name" value="Prednisone ADME"/>
</dbReference>
<dbReference type="PRO" id="PR:P54683"/>
<dbReference type="Proteomes" id="UP000002195">
    <property type="component" value="Chromosome 4"/>
</dbReference>
<dbReference type="GO" id="GO:0016020">
    <property type="term" value="C:membrane"/>
    <property type="evidence" value="ECO:0000318"/>
    <property type="project" value="GO_Central"/>
</dbReference>
<dbReference type="GO" id="GO:0005886">
    <property type="term" value="C:plasma membrane"/>
    <property type="evidence" value="ECO:0000304"/>
    <property type="project" value="dictyBase"/>
</dbReference>
<dbReference type="GO" id="GO:0140359">
    <property type="term" value="F:ABC-type transporter activity"/>
    <property type="evidence" value="ECO:0007669"/>
    <property type="project" value="InterPro"/>
</dbReference>
<dbReference type="GO" id="GO:0005524">
    <property type="term" value="F:ATP binding"/>
    <property type="evidence" value="ECO:0007669"/>
    <property type="project" value="UniProtKB-KW"/>
</dbReference>
<dbReference type="GO" id="GO:0016887">
    <property type="term" value="F:ATP hydrolysis activity"/>
    <property type="evidence" value="ECO:0007669"/>
    <property type="project" value="InterPro"/>
</dbReference>
<dbReference type="GO" id="GO:0042626">
    <property type="term" value="F:ATPase-coupled transmembrane transporter activity"/>
    <property type="evidence" value="ECO:0000318"/>
    <property type="project" value="GO_Central"/>
</dbReference>
<dbReference type="GO" id="GO:0004252">
    <property type="term" value="F:serine-type endopeptidase activity"/>
    <property type="evidence" value="ECO:0007669"/>
    <property type="project" value="InterPro"/>
</dbReference>
<dbReference type="GO" id="GO:0006508">
    <property type="term" value="P:proteolysis"/>
    <property type="evidence" value="ECO:0007669"/>
    <property type="project" value="UniProtKB-KW"/>
</dbReference>
<dbReference type="GO" id="GO:0007165">
    <property type="term" value="P:signal transduction"/>
    <property type="evidence" value="ECO:0000316"/>
    <property type="project" value="dictyBase"/>
</dbReference>
<dbReference type="GO" id="GO:0030587">
    <property type="term" value="P:sorocarp development"/>
    <property type="evidence" value="ECO:0007001"/>
    <property type="project" value="dictyBase"/>
</dbReference>
<dbReference type="GO" id="GO:0031149">
    <property type="term" value="P:sorocarp stalk cell differentiation"/>
    <property type="evidence" value="ECO:0000315"/>
    <property type="project" value="dictyBase"/>
</dbReference>
<dbReference type="GO" id="GO:0055085">
    <property type="term" value="P:transmembrane transport"/>
    <property type="evidence" value="ECO:0000318"/>
    <property type="project" value="GO_Central"/>
</dbReference>
<dbReference type="CDD" id="cd18557">
    <property type="entry name" value="ABC_6TM_TAP_ABCB8_10_like"/>
    <property type="match status" value="1"/>
</dbReference>
<dbReference type="CDD" id="cd04842">
    <property type="entry name" value="Peptidases_S8_Kp43_protease"/>
    <property type="match status" value="1"/>
</dbReference>
<dbReference type="FunFam" id="1.20.1560.10:FF:000193">
    <property type="entry name" value="ABC transporter B family member 7"/>
    <property type="match status" value="1"/>
</dbReference>
<dbReference type="FunFam" id="2.60.120.380:FF:000024">
    <property type="entry name" value="Serine protease/ABC transporter B family protein tagA"/>
    <property type="match status" value="1"/>
</dbReference>
<dbReference type="FunFam" id="3.40.50.300:FF:001982">
    <property type="entry name" value="Serine protease/ABC transporter B family protein tagC"/>
    <property type="match status" value="1"/>
</dbReference>
<dbReference type="Gene3D" id="2.60.120.380">
    <property type="match status" value="1"/>
</dbReference>
<dbReference type="Gene3D" id="1.20.1560.10">
    <property type="entry name" value="ABC transporter type 1, transmembrane domain"/>
    <property type="match status" value="2"/>
</dbReference>
<dbReference type="Gene3D" id="3.40.50.300">
    <property type="entry name" value="P-loop containing nucleotide triphosphate hydrolases"/>
    <property type="match status" value="1"/>
</dbReference>
<dbReference type="Gene3D" id="3.40.50.200">
    <property type="entry name" value="Peptidase S8/S53 domain"/>
    <property type="match status" value="1"/>
</dbReference>
<dbReference type="InterPro" id="IPR003593">
    <property type="entry name" value="AAA+_ATPase"/>
</dbReference>
<dbReference type="InterPro" id="IPR011527">
    <property type="entry name" value="ABC1_TM_dom"/>
</dbReference>
<dbReference type="InterPro" id="IPR036640">
    <property type="entry name" value="ABC1_TM_sf"/>
</dbReference>
<dbReference type="InterPro" id="IPR003439">
    <property type="entry name" value="ABC_transporter-like_ATP-bd"/>
</dbReference>
<dbReference type="InterPro" id="IPR017871">
    <property type="entry name" value="ABC_transporter-like_CS"/>
</dbReference>
<dbReference type="InterPro" id="IPR008979">
    <property type="entry name" value="Galactose-bd-like_sf"/>
</dbReference>
<dbReference type="InterPro" id="IPR027417">
    <property type="entry name" value="P-loop_NTPase"/>
</dbReference>
<dbReference type="InterPro" id="IPR000209">
    <property type="entry name" value="Peptidase_S8/S53_dom"/>
</dbReference>
<dbReference type="InterPro" id="IPR036852">
    <property type="entry name" value="Peptidase_S8/S53_dom_sf"/>
</dbReference>
<dbReference type="InterPro" id="IPR022398">
    <property type="entry name" value="Peptidase_S8_His-AS"/>
</dbReference>
<dbReference type="InterPro" id="IPR023828">
    <property type="entry name" value="Peptidase_S8_Ser-AS"/>
</dbReference>
<dbReference type="InterPro" id="IPR015500">
    <property type="entry name" value="Peptidase_S8_subtilisin-rel"/>
</dbReference>
<dbReference type="InterPro" id="IPR034058">
    <property type="entry name" value="TagA/B/C/D_pept_dom"/>
</dbReference>
<dbReference type="InterPro" id="IPR039421">
    <property type="entry name" value="Type_1_exporter"/>
</dbReference>
<dbReference type="PANTHER" id="PTHR43394:SF1">
    <property type="entry name" value="ATP-BINDING CASSETTE SUB-FAMILY B MEMBER 10, MITOCHONDRIAL"/>
    <property type="match status" value="1"/>
</dbReference>
<dbReference type="PANTHER" id="PTHR43394">
    <property type="entry name" value="ATP-DEPENDENT PERMEASE MDL1, MITOCHONDRIAL"/>
    <property type="match status" value="1"/>
</dbReference>
<dbReference type="Pfam" id="PF00664">
    <property type="entry name" value="ABC_membrane"/>
    <property type="match status" value="1"/>
</dbReference>
<dbReference type="Pfam" id="PF00005">
    <property type="entry name" value="ABC_tran"/>
    <property type="match status" value="1"/>
</dbReference>
<dbReference type="Pfam" id="PF00082">
    <property type="entry name" value="Peptidase_S8"/>
    <property type="match status" value="1"/>
</dbReference>
<dbReference type="PRINTS" id="PR00723">
    <property type="entry name" value="SUBTILISIN"/>
</dbReference>
<dbReference type="SMART" id="SM00382">
    <property type="entry name" value="AAA"/>
    <property type="match status" value="1"/>
</dbReference>
<dbReference type="SUPFAM" id="SSF90123">
    <property type="entry name" value="ABC transporter transmembrane region"/>
    <property type="match status" value="1"/>
</dbReference>
<dbReference type="SUPFAM" id="SSF49785">
    <property type="entry name" value="Galactose-binding domain-like"/>
    <property type="match status" value="1"/>
</dbReference>
<dbReference type="SUPFAM" id="SSF52540">
    <property type="entry name" value="P-loop containing nucleoside triphosphate hydrolases"/>
    <property type="match status" value="1"/>
</dbReference>
<dbReference type="SUPFAM" id="SSF52743">
    <property type="entry name" value="Subtilisin-like"/>
    <property type="match status" value="1"/>
</dbReference>
<dbReference type="PROSITE" id="PS50929">
    <property type="entry name" value="ABC_TM1F"/>
    <property type="match status" value="1"/>
</dbReference>
<dbReference type="PROSITE" id="PS00211">
    <property type="entry name" value="ABC_TRANSPORTER_1"/>
    <property type="match status" value="1"/>
</dbReference>
<dbReference type="PROSITE" id="PS50893">
    <property type="entry name" value="ABC_TRANSPORTER_2"/>
    <property type="match status" value="1"/>
</dbReference>
<dbReference type="PROSITE" id="PS51892">
    <property type="entry name" value="SUBTILASE"/>
    <property type="match status" value="1"/>
</dbReference>
<dbReference type="PROSITE" id="PS00137">
    <property type="entry name" value="SUBTILASE_HIS"/>
    <property type="match status" value="1"/>
</dbReference>
<dbReference type="PROSITE" id="PS00138">
    <property type="entry name" value="SUBTILASE_SER"/>
    <property type="match status" value="1"/>
</dbReference>
<evidence type="ECO:0000255" key="1"/>
<evidence type="ECO:0000255" key="2">
    <source>
        <dbReference type="PROSITE-ProRule" id="PRU00434"/>
    </source>
</evidence>
<evidence type="ECO:0000255" key="3">
    <source>
        <dbReference type="PROSITE-ProRule" id="PRU00441"/>
    </source>
</evidence>
<evidence type="ECO:0000255" key="4">
    <source>
        <dbReference type="PROSITE-ProRule" id="PRU01240"/>
    </source>
</evidence>
<evidence type="ECO:0000256" key="5">
    <source>
        <dbReference type="SAM" id="MobiDB-lite"/>
    </source>
</evidence>
<evidence type="ECO:0000269" key="6">
    <source>
    </source>
</evidence>
<evidence type="ECO:0000305" key="7"/>
<protein>
    <recommendedName>
        <fullName>Serine protease/ABC transporter B family protein tagB</fullName>
        <ecNumber>3.4.21.-</ecNumber>
    </recommendedName>
    <alternativeName>
        <fullName>Prestalk-specific protein tagB</fullName>
    </alternativeName>
</protein>
<reference key="1">
    <citation type="journal article" date="1995" name="Genes Dev.">
        <title>A multidrug resistance transporter/serine protease gene is required for prestalk specialization in Dictyostelium.</title>
        <authorList>
            <person name="Shaulsky G."/>
            <person name="Kuspa A."/>
            <person name="Loomis W.F."/>
        </authorList>
    </citation>
    <scope>NUCLEOTIDE SEQUENCE [GENOMIC DNA]</scope>
    <scope>FUNCTION</scope>
    <scope>DISRUPTION PHENOTYPE</scope>
    <source>
        <strain>AX4</strain>
    </source>
</reference>
<reference key="2">
    <citation type="journal article" date="2005" name="Nature">
        <title>The genome of the social amoeba Dictyostelium discoideum.</title>
        <authorList>
            <person name="Eichinger L."/>
            <person name="Pachebat J.A."/>
            <person name="Gloeckner G."/>
            <person name="Rajandream M.A."/>
            <person name="Sucgang R."/>
            <person name="Berriman M."/>
            <person name="Song J."/>
            <person name="Olsen R."/>
            <person name="Szafranski K."/>
            <person name="Xu Q."/>
            <person name="Tunggal B."/>
            <person name="Kummerfeld S."/>
            <person name="Madera M."/>
            <person name="Konfortov B.A."/>
            <person name="Rivero F."/>
            <person name="Bankier A.T."/>
            <person name="Lehmann R."/>
            <person name="Hamlin N."/>
            <person name="Davies R."/>
            <person name="Gaudet P."/>
            <person name="Fey P."/>
            <person name="Pilcher K."/>
            <person name="Chen G."/>
            <person name="Saunders D."/>
            <person name="Sodergren E.J."/>
            <person name="Davis P."/>
            <person name="Kerhornou A."/>
            <person name="Nie X."/>
            <person name="Hall N."/>
            <person name="Anjard C."/>
            <person name="Hemphill L."/>
            <person name="Bason N."/>
            <person name="Farbrother P."/>
            <person name="Desany B."/>
            <person name="Just E."/>
            <person name="Morio T."/>
            <person name="Rost R."/>
            <person name="Churcher C.M."/>
            <person name="Cooper J."/>
            <person name="Haydock S."/>
            <person name="van Driessche N."/>
            <person name="Cronin A."/>
            <person name="Goodhead I."/>
            <person name="Muzny D.M."/>
            <person name="Mourier T."/>
            <person name="Pain A."/>
            <person name="Lu M."/>
            <person name="Harper D."/>
            <person name="Lindsay R."/>
            <person name="Hauser H."/>
            <person name="James K.D."/>
            <person name="Quiles M."/>
            <person name="Madan Babu M."/>
            <person name="Saito T."/>
            <person name="Buchrieser C."/>
            <person name="Wardroper A."/>
            <person name="Felder M."/>
            <person name="Thangavelu M."/>
            <person name="Johnson D."/>
            <person name="Knights A."/>
            <person name="Loulseged H."/>
            <person name="Mungall K.L."/>
            <person name="Oliver K."/>
            <person name="Price C."/>
            <person name="Quail M.A."/>
            <person name="Urushihara H."/>
            <person name="Hernandez J."/>
            <person name="Rabbinowitsch E."/>
            <person name="Steffen D."/>
            <person name="Sanders M."/>
            <person name="Ma J."/>
            <person name="Kohara Y."/>
            <person name="Sharp S."/>
            <person name="Simmonds M.N."/>
            <person name="Spiegler S."/>
            <person name="Tivey A."/>
            <person name="Sugano S."/>
            <person name="White B."/>
            <person name="Walker D."/>
            <person name="Woodward J.R."/>
            <person name="Winckler T."/>
            <person name="Tanaka Y."/>
            <person name="Shaulsky G."/>
            <person name="Schleicher M."/>
            <person name="Weinstock G.M."/>
            <person name="Rosenthal A."/>
            <person name="Cox E.C."/>
            <person name="Chisholm R.L."/>
            <person name="Gibbs R.A."/>
            <person name="Loomis W.F."/>
            <person name="Platzer M."/>
            <person name="Kay R.R."/>
            <person name="Williams J.G."/>
            <person name="Dear P.H."/>
            <person name="Noegel A.A."/>
            <person name="Barrell B.G."/>
            <person name="Kuspa A."/>
        </authorList>
    </citation>
    <scope>NUCLEOTIDE SEQUENCE [LARGE SCALE GENOMIC DNA]</scope>
    <source>
        <strain>AX4</strain>
    </source>
</reference>
<name>TAGB_DICDI</name>
<accession>P54683</accession>
<accession>Q54M83</accession>
<proteinExistence type="inferred from homology"/>